<evidence type="ECO:0000255" key="1">
    <source>
        <dbReference type="HAMAP-Rule" id="MF_01593"/>
    </source>
</evidence>
<sequence>MIKWPWKVQESAHQTALPWQEALSIPLLTGLTEQEQSKLVTLAERFLQQKRLVPLQGFELDSLRSCRIALLFCLPVLELGLEWLDGFHEVLIYPAPFVVDDEWEDDIGLVHNQRIVQSGQSWQQGPIVLNWLDIQDSFDASGFNLIIHEVAHKLDTRNGDRASGVPFISLREVAGWEHDLHAAMNNIQEEIELVGENAASIDAYAASDPAECFAVLSEYFFSAPELFAPRFPSLWQRFCQFYQQDPLQRLHHANDTDSFSATNVH</sequence>
<protein>
    <recommendedName>
        <fullName evidence="1">Mlc titration factor A</fullName>
    </recommendedName>
    <alternativeName>
        <fullName evidence="1">Probable zinc metallopeptidase MtfA</fullName>
        <ecNumber evidence="1">3.4.11.-</ecNumber>
    </alternativeName>
</protein>
<dbReference type="EC" id="3.4.11.-" evidence="1"/>
<dbReference type="EMBL" id="CU928145">
    <property type="protein sequence ID" value="CAU98073.1"/>
    <property type="molecule type" value="Genomic_DNA"/>
</dbReference>
<dbReference type="RefSeq" id="WP_001300801.1">
    <property type="nucleotide sequence ID" value="NC_011748.1"/>
</dbReference>
<dbReference type="SMR" id="B7L8Z1"/>
<dbReference type="MEROPS" id="M90.001"/>
<dbReference type="KEGG" id="eck:EC55989_2200"/>
<dbReference type="HOGENOM" id="CLU_063037_2_0_6"/>
<dbReference type="Proteomes" id="UP000000746">
    <property type="component" value="Chromosome"/>
</dbReference>
<dbReference type="GO" id="GO:0005829">
    <property type="term" value="C:cytosol"/>
    <property type="evidence" value="ECO:0007669"/>
    <property type="project" value="TreeGrafter"/>
</dbReference>
<dbReference type="GO" id="GO:0004177">
    <property type="term" value="F:aminopeptidase activity"/>
    <property type="evidence" value="ECO:0007669"/>
    <property type="project" value="UniProtKB-UniRule"/>
</dbReference>
<dbReference type="GO" id="GO:0008237">
    <property type="term" value="F:metallopeptidase activity"/>
    <property type="evidence" value="ECO:0007669"/>
    <property type="project" value="UniProtKB-UniRule"/>
</dbReference>
<dbReference type="GO" id="GO:0008270">
    <property type="term" value="F:zinc ion binding"/>
    <property type="evidence" value="ECO:0007669"/>
    <property type="project" value="UniProtKB-UniRule"/>
</dbReference>
<dbReference type="GO" id="GO:0006508">
    <property type="term" value="P:proteolysis"/>
    <property type="evidence" value="ECO:0007669"/>
    <property type="project" value="UniProtKB-KW"/>
</dbReference>
<dbReference type="CDD" id="cd20169">
    <property type="entry name" value="Peptidase_M90_mtfA"/>
    <property type="match status" value="1"/>
</dbReference>
<dbReference type="FunFam" id="1.10.472.150:FF:000001">
    <property type="entry name" value="Protein MtfA"/>
    <property type="match status" value="1"/>
</dbReference>
<dbReference type="FunFam" id="3.40.390.10:FF:000012">
    <property type="entry name" value="Protein MtfA"/>
    <property type="match status" value="1"/>
</dbReference>
<dbReference type="Gene3D" id="3.40.390.10">
    <property type="entry name" value="Collagenase (Catalytic Domain)"/>
    <property type="match status" value="1"/>
</dbReference>
<dbReference type="Gene3D" id="1.10.472.150">
    <property type="entry name" value="Glucose-regulated metallo-peptidase M90, N-terminal domain"/>
    <property type="match status" value="1"/>
</dbReference>
<dbReference type="HAMAP" id="MF_01593">
    <property type="entry name" value="MtfA"/>
    <property type="match status" value="1"/>
</dbReference>
<dbReference type="InterPro" id="IPR024079">
    <property type="entry name" value="MetalloPept_cat_dom_sf"/>
</dbReference>
<dbReference type="InterPro" id="IPR057256">
    <property type="entry name" value="MtfA_enterob"/>
</dbReference>
<dbReference type="InterPro" id="IPR010384">
    <property type="entry name" value="MtfA_fam"/>
</dbReference>
<dbReference type="InterPro" id="IPR042252">
    <property type="entry name" value="MtfA_N"/>
</dbReference>
<dbReference type="NCBIfam" id="NF011939">
    <property type="entry name" value="PRK15410.1"/>
    <property type="match status" value="1"/>
</dbReference>
<dbReference type="PANTHER" id="PTHR30164">
    <property type="entry name" value="MTFA PEPTIDASE"/>
    <property type="match status" value="1"/>
</dbReference>
<dbReference type="PANTHER" id="PTHR30164:SF2">
    <property type="entry name" value="PROTEIN MTFA"/>
    <property type="match status" value="1"/>
</dbReference>
<dbReference type="Pfam" id="PF06167">
    <property type="entry name" value="Peptidase_M90"/>
    <property type="match status" value="1"/>
</dbReference>
<dbReference type="SUPFAM" id="SSF55486">
    <property type="entry name" value="Metalloproteases ('zincins'), catalytic domain"/>
    <property type="match status" value="1"/>
</dbReference>
<accession>B7L8Z1</accession>
<comment type="function">
    <text evidence="1">Involved in the modulation of the activity of the glucose-phosphotransferase system (glucose-PTS). Interacts with the transcriptional repressor Mlc, preventing its interaction with DNA and leading to the modulation of expression of genes regulated by Mlc, including ptsG, which encodes the PTS system glucose-specific EIICB component.</text>
</comment>
<comment type="function">
    <text evidence="1">Shows zinc-dependent metallopeptidase activity.</text>
</comment>
<comment type="cofactor">
    <cofactor evidence="1">
        <name>Zn(2+)</name>
        <dbReference type="ChEBI" id="CHEBI:29105"/>
    </cofactor>
    <text evidence="1">Binds 1 zinc ion per subunit.</text>
</comment>
<comment type="subunit">
    <text evidence="1">Interacts with Mlc.</text>
</comment>
<comment type="subcellular location">
    <subcellularLocation>
        <location evidence="1">Cytoplasm</location>
    </subcellularLocation>
</comment>
<comment type="similarity">
    <text evidence="1">Belongs to the MtfA family.</text>
</comment>
<name>MTFA_ECO55</name>
<keyword id="KW-0031">Aminopeptidase</keyword>
<keyword id="KW-0963">Cytoplasm</keyword>
<keyword id="KW-0378">Hydrolase</keyword>
<keyword id="KW-0479">Metal-binding</keyword>
<keyword id="KW-0482">Metalloprotease</keyword>
<keyword id="KW-0645">Protease</keyword>
<keyword id="KW-1185">Reference proteome</keyword>
<keyword id="KW-0862">Zinc</keyword>
<organism>
    <name type="scientific">Escherichia coli (strain 55989 / EAEC)</name>
    <dbReference type="NCBI Taxonomy" id="585055"/>
    <lineage>
        <taxon>Bacteria</taxon>
        <taxon>Pseudomonadati</taxon>
        <taxon>Pseudomonadota</taxon>
        <taxon>Gammaproteobacteria</taxon>
        <taxon>Enterobacterales</taxon>
        <taxon>Enterobacteriaceae</taxon>
        <taxon>Escherichia</taxon>
    </lineage>
</organism>
<feature type="chain" id="PRO_1000185707" description="Mlc titration factor A">
    <location>
        <begin position="1"/>
        <end position="265"/>
    </location>
</feature>
<feature type="binding site" evidence="1">
    <location>
        <position position="111"/>
    </location>
    <ligand>
        <name>Zn(2+)</name>
        <dbReference type="ChEBI" id="CHEBI:29105"/>
    </ligand>
</feature>
<feature type="binding site" evidence="1">
    <location>
        <position position="148"/>
    </location>
    <ligand>
        <name>Zn(2+)</name>
        <dbReference type="ChEBI" id="CHEBI:29105"/>
    </ligand>
</feature>
<feature type="binding site" evidence="1">
    <location>
        <position position="152"/>
    </location>
    <ligand>
        <name>Zn(2+)</name>
        <dbReference type="ChEBI" id="CHEBI:29105"/>
    </ligand>
</feature>
<feature type="binding site" evidence="1">
    <location>
        <position position="211"/>
    </location>
    <ligand>
        <name>Zn(2+)</name>
        <dbReference type="ChEBI" id="CHEBI:29105"/>
    </ligand>
</feature>
<proteinExistence type="inferred from homology"/>
<reference key="1">
    <citation type="journal article" date="2009" name="PLoS Genet.">
        <title>Organised genome dynamics in the Escherichia coli species results in highly diverse adaptive paths.</title>
        <authorList>
            <person name="Touchon M."/>
            <person name="Hoede C."/>
            <person name="Tenaillon O."/>
            <person name="Barbe V."/>
            <person name="Baeriswyl S."/>
            <person name="Bidet P."/>
            <person name="Bingen E."/>
            <person name="Bonacorsi S."/>
            <person name="Bouchier C."/>
            <person name="Bouvet O."/>
            <person name="Calteau A."/>
            <person name="Chiapello H."/>
            <person name="Clermont O."/>
            <person name="Cruveiller S."/>
            <person name="Danchin A."/>
            <person name="Diard M."/>
            <person name="Dossat C."/>
            <person name="Karoui M.E."/>
            <person name="Frapy E."/>
            <person name="Garry L."/>
            <person name="Ghigo J.M."/>
            <person name="Gilles A.M."/>
            <person name="Johnson J."/>
            <person name="Le Bouguenec C."/>
            <person name="Lescat M."/>
            <person name="Mangenot S."/>
            <person name="Martinez-Jehanne V."/>
            <person name="Matic I."/>
            <person name="Nassif X."/>
            <person name="Oztas S."/>
            <person name="Petit M.A."/>
            <person name="Pichon C."/>
            <person name="Rouy Z."/>
            <person name="Ruf C.S."/>
            <person name="Schneider D."/>
            <person name="Tourret J."/>
            <person name="Vacherie B."/>
            <person name="Vallenet D."/>
            <person name="Medigue C."/>
            <person name="Rocha E.P.C."/>
            <person name="Denamur E."/>
        </authorList>
    </citation>
    <scope>NUCLEOTIDE SEQUENCE [LARGE SCALE GENOMIC DNA]</scope>
    <source>
        <strain>55989 / EAEC</strain>
    </source>
</reference>
<gene>
    <name evidence="1" type="primary">mtfA</name>
    <name type="ordered locus">EC55989_2200</name>
</gene>